<keyword id="KW-1017">Isopeptide bond</keyword>
<keyword id="KW-0479">Metal-binding</keyword>
<keyword id="KW-0539">Nucleus</keyword>
<keyword id="KW-0597">Phosphoprotein</keyword>
<keyword id="KW-1185">Reference proteome</keyword>
<keyword id="KW-0832">Ubl conjugation</keyword>
<keyword id="KW-0862">Zinc</keyword>
<keyword id="KW-0863">Zinc-finger</keyword>
<reference key="1">
    <citation type="submission" date="2004-11" db="EMBL/GenBank/DDBJ databases">
        <authorList>
            <consortium name="The German cDNA consortium"/>
        </authorList>
    </citation>
    <scope>NUCLEOTIDE SEQUENCE [LARGE SCALE MRNA]</scope>
    <source>
        <tissue>Heart</tissue>
    </source>
</reference>
<proteinExistence type="evidence at transcript level"/>
<sequence>MAATVNLELDPIFLKALGFLHSKSKDSAEKLKALLDESLARGIDSSYRPSQKDVEPPKISSTKNISIKQEPKISSSLPSGNNNGKVLTTEKVKKEAEKRPADKMKSDITEGVDIPKKPRLEKPETQSSPITVQSSKDLPMADLSSFEETSADDFAMEMGLACVVCRQMMVASGNQLVECQECHNLYHRDCHKPQVTDKEANDPRLVWYCARCTRQMKRMAQKTQKPPQKPAPAVVSVTPAVKDPLVKKPETKLKQETTFLAFKRTEVKTSTVISGNSSSASISSSVTSGLTGWAAFAAKTSSAGPSTAKLSSTTQNNTGKPATSSANQKPVGLTGLATSSKGGIGSKIGSNNSTTPTVPLKPPPPLTLGKTGLSRSVSCDNVSKVGLPSPSSLVPGSSSQLSGNGNSGTPGPSGSTASKTTSESSSSPSASLKGPTSQESQLNAMKRLQMVKKKAAQKKLKK</sequence>
<evidence type="ECO:0000250" key="1">
    <source>
        <dbReference type="UniProtKB" id="Q96CB8"/>
    </source>
</evidence>
<evidence type="ECO:0000255" key="2">
    <source>
        <dbReference type="PROSITE-ProRule" id="PRU00146"/>
    </source>
</evidence>
<evidence type="ECO:0000256" key="3">
    <source>
        <dbReference type="SAM" id="MobiDB-lite"/>
    </source>
</evidence>
<evidence type="ECO:0000305" key="4"/>
<dbReference type="EMBL" id="CR858161">
    <property type="protein sequence ID" value="CAH90400.1"/>
    <property type="molecule type" value="mRNA"/>
</dbReference>
<dbReference type="RefSeq" id="NP_001125197.1">
    <property type="nucleotide sequence ID" value="NM_001131725.2"/>
</dbReference>
<dbReference type="SMR" id="Q5RCV7"/>
<dbReference type="FunCoup" id="Q5RCV7">
    <property type="interactions" value="3229"/>
</dbReference>
<dbReference type="STRING" id="9601.ENSPPYP00000016727"/>
<dbReference type="GeneID" id="100172088"/>
<dbReference type="KEGG" id="pon:100172088"/>
<dbReference type="CTD" id="57117"/>
<dbReference type="eggNOG" id="KOG4323">
    <property type="taxonomic scope" value="Eukaryota"/>
</dbReference>
<dbReference type="InParanoid" id="Q5RCV7"/>
<dbReference type="OrthoDB" id="5846437at2759"/>
<dbReference type="Proteomes" id="UP000001595">
    <property type="component" value="Unplaced"/>
</dbReference>
<dbReference type="GO" id="GO:0160232">
    <property type="term" value="C:INTAC complex"/>
    <property type="evidence" value="ECO:0000250"/>
    <property type="project" value="UniProtKB"/>
</dbReference>
<dbReference type="GO" id="GO:0032039">
    <property type="term" value="C:integrator complex"/>
    <property type="evidence" value="ECO:0007669"/>
    <property type="project" value="TreeGrafter"/>
</dbReference>
<dbReference type="GO" id="GO:0005634">
    <property type="term" value="C:nucleus"/>
    <property type="evidence" value="ECO:0000250"/>
    <property type="project" value="UniProtKB"/>
</dbReference>
<dbReference type="GO" id="GO:0008270">
    <property type="term" value="F:zinc ion binding"/>
    <property type="evidence" value="ECO:0007669"/>
    <property type="project" value="UniProtKB-KW"/>
</dbReference>
<dbReference type="GO" id="GO:0160240">
    <property type="term" value="P:RNA polymerase II transcription initiation surveillance"/>
    <property type="evidence" value="ECO:0000250"/>
    <property type="project" value="UniProtKB"/>
</dbReference>
<dbReference type="GO" id="GO:0034472">
    <property type="term" value="P:snRNA 3'-end processing"/>
    <property type="evidence" value="ECO:0007669"/>
    <property type="project" value="TreeGrafter"/>
</dbReference>
<dbReference type="CDD" id="cd15501">
    <property type="entry name" value="PHD_Int12"/>
    <property type="match status" value="1"/>
</dbReference>
<dbReference type="FunFam" id="3.30.40.10:FF:000101">
    <property type="entry name" value="Integrator complex subunit 12"/>
    <property type="match status" value="1"/>
</dbReference>
<dbReference type="Gene3D" id="3.30.40.10">
    <property type="entry name" value="Zinc/RING finger domain, C3HC4 (zinc finger)"/>
    <property type="match status" value="1"/>
</dbReference>
<dbReference type="InterPro" id="IPR039054">
    <property type="entry name" value="Int12_PHD"/>
</dbReference>
<dbReference type="InterPro" id="IPR051776">
    <property type="entry name" value="Integrator_subunit_12"/>
</dbReference>
<dbReference type="InterPro" id="IPR019786">
    <property type="entry name" value="Zinc_finger_PHD-type_CS"/>
</dbReference>
<dbReference type="InterPro" id="IPR011011">
    <property type="entry name" value="Znf_FYVE_PHD"/>
</dbReference>
<dbReference type="InterPro" id="IPR001965">
    <property type="entry name" value="Znf_PHD"/>
</dbReference>
<dbReference type="InterPro" id="IPR019787">
    <property type="entry name" value="Znf_PHD-finger"/>
</dbReference>
<dbReference type="InterPro" id="IPR013083">
    <property type="entry name" value="Znf_RING/FYVE/PHD"/>
</dbReference>
<dbReference type="PANTHER" id="PTHR13415:SF2">
    <property type="entry name" value="INTEGRATOR COMPLEX SUBUNIT 12"/>
    <property type="match status" value="1"/>
</dbReference>
<dbReference type="PANTHER" id="PTHR13415">
    <property type="entry name" value="NUCLEAR FACTOR-RELATED"/>
    <property type="match status" value="1"/>
</dbReference>
<dbReference type="Pfam" id="PF00628">
    <property type="entry name" value="PHD"/>
    <property type="match status" value="1"/>
</dbReference>
<dbReference type="SMART" id="SM00249">
    <property type="entry name" value="PHD"/>
    <property type="match status" value="1"/>
</dbReference>
<dbReference type="SUPFAM" id="SSF57903">
    <property type="entry name" value="FYVE/PHD zinc finger"/>
    <property type="match status" value="1"/>
</dbReference>
<dbReference type="PROSITE" id="PS01359">
    <property type="entry name" value="ZF_PHD_1"/>
    <property type="match status" value="1"/>
</dbReference>
<dbReference type="PROSITE" id="PS50016">
    <property type="entry name" value="ZF_PHD_2"/>
    <property type="match status" value="1"/>
</dbReference>
<accession>Q5RCV7</accession>
<comment type="function">
    <text evidence="1">Component of the integrator complex, a multiprotein complex that terminates RNA polymerase II (Pol II) transcription in the promoter-proximal region of genes. The integrator complex provides a quality checkpoint during transcription elongation by driving premature transcription termination of transcripts that are unfavorably configured for transcriptional elongation: the complex terminates transcription by (1) catalyzing dephosphorylation of the C-terminal domain (CTD) of Pol II subunit POLR2A/RPB1 and SUPT5H/SPT5, (2) degrading the exiting nascent RNA transcript via endonuclease activity and (3) promoting the release of Pol II from bound DNA. The integrator complex is also involved in terminating the synthesis of non-coding Pol II transcripts, such as enhancer RNAs (eRNAs), small nuclear RNAs (snRNAs), telomerase RNAs and long non-coding RNAs (lncRNAs). Mediates recruitment of cytoplasmic dynein to the nuclear envelope, probably as component of the integrator complex.</text>
</comment>
<comment type="subunit">
    <text evidence="1">Component of the Integrator complex, composed of core subunits INTS1, INTS2, INTS3, INTS4, INTS5, INTS6, INTS7, INTS8, INTS9/RC74, INTS10, INTS11/CPSF3L, INTS12, INTS13, INTS14 and INTS15. The core complex associates with protein phosphatase 2A subunits PPP2CA and PPP2R1A, to form the Integrator-PP2A (INTAC) complex.</text>
</comment>
<comment type="subcellular location">
    <subcellularLocation>
        <location evidence="1">Nucleus</location>
    </subcellularLocation>
</comment>
<comment type="PTM">
    <text evidence="1">Dephosphorylated at Ser-128 by the PNUTS-PP1 complex, promoting RNA polymerase II transcription pause-release.</text>
</comment>
<comment type="similarity">
    <text evidence="4">Belongs to the Integrator subunit 12 family.</text>
</comment>
<feature type="chain" id="PRO_0000059315" description="Integrator complex subunit 12">
    <location>
        <begin position="1"/>
        <end position="462"/>
    </location>
</feature>
<feature type="zinc finger region" description="PHD-type" evidence="2">
    <location>
        <begin position="159"/>
        <end position="215"/>
    </location>
</feature>
<feature type="region of interest" description="Disordered" evidence="3">
    <location>
        <begin position="42"/>
        <end position="132"/>
    </location>
</feature>
<feature type="region of interest" description="Disordered" evidence="3">
    <location>
        <begin position="301"/>
        <end position="462"/>
    </location>
</feature>
<feature type="compositionally biased region" description="Polar residues" evidence="3">
    <location>
        <begin position="59"/>
        <end position="86"/>
    </location>
</feature>
<feature type="compositionally biased region" description="Basic and acidic residues" evidence="3">
    <location>
        <begin position="88"/>
        <end position="124"/>
    </location>
</feature>
<feature type="compositionally biased region" description="Polar residues" evidence="3">
    <location>
        <begin position="301"/>
        <end position="328"/>
    </location>
</feature>
<feature type="compositionally biased region" description="Low complexity" evidence="3">
    <location>
        <begin position="347"/>
        <end position="358"/>
    </location>
</feature>
<feature type="compositionally biased region" description="Low complexity" evidence="3">
    <location>
        <begin position="382"/>
        <end position="437"/>
    </location>
</feature>
<feature type="compositionally biased region" description="Basic residues" evidence="3">
    <location>
        <begin position="449"/>
        <end position="462"/>
    </location>
</feature>
<feature type="modified residue" description="Phosphoserine" evidence="1">
    <location>
        <position position="128"/>
    </location>
</feature>
<feature type="cross-link" description="Glycyl lysine isopeptide (Lys-Gly) (interchain with G-Cter in SUMO2)" evidence="1">
    <location>
        <position position="68"/>
    </location>
</feature>
<feature type="cross-link" description="Glycyl lysine isopeptide (Lys-Gly) (interchain with G-Cter in SUMO2)" evidence="1">
    <location>
        <position position="254"/>
    </location>
</feature>
<name>INT12_PONAB</name>
<organism>
    <name type="scientific">Pongo abelii</name>
    <name type="common">Sumatran orangutan</name>
    <name type="synonym">Pongo pygmaeus abelii</name>
    <dbReference type="NCBI Taxonomy" id="9601"/>
    <lineage>
        <taxon>Eukaryota</taxon>
        <taxon>Metazoa</taxon>
        <taxon>Chordata</taxon>
        <taxon>Craniata</taxon>
        <taxon>Vertebrata</taxon>
        <taxon>Euteleostomi</taxon>
        <taxon>Mammalia</taxon>
        <taxon>Eutheria</taxon>
        <taxon>Euarchontoglires</taxon>
        <taxon>Primates</taxon>
        <taxon>Haplorrhini</taxon>
        <taxon>Catarrhini</taxon>
        <taxon>Hominidae</taxon>
        <taxon>Pongo</taxon>
    </lineage>
</organism>
<protein>
    <recommendedName>
        <fullName>Integrator complex subunit 12</fullName>
        <shortName>Int12</shortName>
    </recommendedName>
    <alternativeName>
        <fullName>PHD finger protein 22</fullName>
    </alternativeName>
</protein>
<gene>
    <name type="primary">INTS12</name>
    <name type="synonym">PHF22</name>
</gene>